<protein>
    <recommendedName>
        <fullName evidence="1">Initiator protein NS1</fullName>
        <shortName>NS1</shortName>
        <ecNumber evidence="10">3.1.21.-</ecNumber>
        <ecNumber evidence="5">3.6.4.12</ecNumber>
    </recommendedName>
    <alternativeName>
        <fullName>NCVP1</fullName>
    </alternativeName>
    <alternativeName>
        <fullName>Non-capsid protein NS-1</fullName>
    </alternativeName>
    <alternativeName>
        <fullName>Non-structural protein 1</fullName>
    </alternativeName>
    <alternativeName>
        <fullName>Non-structural protein NS1</fullName>
    </alternativeName>
</protein>
<name>NS1_PAVHV</name>
<organism>
    <name type="scientific">Human parvovirus B19 (strain HV)</name>
    <name type="common">HPV B19</name>
    <dbReference type="NCBI Taxonomy" id="648237"/>
    <lineage>
        <taxon>Viruses</taxon>
        <taxon>Monodnaviria</taxon>
        <taxon>Shotokuvirae</taxon>
        <taxon>Cossaviricota</taxon>
        <taxon>Quintoviricetes</taxon>
        <taxon>Piccovirales</taxon>
        <taxon>Parvoviridae</taxon>
        <taxon>Parvovirinae</taxon>
        <taxon>Erythroparvovirus</taxon>
        <taxon>Erythroparvovirus primate1</taxon>
    </lineage>
</organism>
<comment type="function">
    <text evidence="5 6 7 8 9 10 11 12">Multifunctional protein essential for viral DNA replication, which cooperatively interacts with the viral DNA origin of replication and transactivates several promoters including the viral p6 promoter (PubMed:11853402, PubMed:24418564, PubMed:27809499). Binds the origin of replication and performs an endonucleolytic nick within a conserved sequence in the viral genome, thereby initiating the rolling circle replication (RCR) (PubMed:27809499). Participates in the transcriptional regulation the viral p6 promoter that regulates all viral transcripts and the cellular CDN1A or IL6 promoters (PubMed:11853402, PubMed:8970971). Transactivates several host promoters some of which induce the S cell cycle phase for the production of host replicative proteins (PubMed:15518826, PubMed:20890043, PubMed:24049177). Up-regulates the expression of host E2F4 and E2F5 and interacts with both these factors thereby inhibiting the host cell cycle G2/M transition (PubMed:20890043). This arrest promotes apoptosis for viral release (PubMed:20890043, PubMed:9525624).</text>
</comment>
<comment type="catalytic activity">
    <reaction evidence="5">
        <text>ATP + H2O = ADP + phosphate + H(+)</text>
        <dbReference type="Rhea" id="RHEA:13065"/>
        <dbReference type="ChEBI" id="CHEBI:15377"/>
        <dbReference type="ChEBI" id="CHEBI:15378"/>
        <dbReference type="ChEBI" id="CHEBI:30616"/>
        <dbReference type="ChEBI" id="CHEBI:43474"/>
        <dbReference type="ChEBI" id="CHEBI:456216"/>
        <dbReference type="EC" id="3.6.4.12"/>
    </reaction>
</comment>
<comment type="cofactor">
    <cofactor evidence="10">
        <name>Mn(2+)</name>
        <dbReference type="ChEBI" id="CHEBI:29035"/>
    </cofactor>
    <text evidence="10">The endonuclease active site can probably bind other divalent cations.</text>
</comment>
<comment type="biophysicochemical properties">
    <phDependence>
        <text evidence="10">Optimum pH is 7.0-7.5.</text>
    </phDependence>
</comment>
<comment type="subunit">
    <text evidence="5 6 7 10">Homooligomer; when bound to DNA (PubMed:27809499). Interacts with host E2F4 and E2F5; these interactions promote the nuclear import of E2F4 and E2F5 and the G2/M block observed in host cells (PubMed:20890043). Interacts with host transcription factor SP1; this interaction is important for NS1 transcriptional regulation of p21/WAF1 (PubMed:11853402, PubMed:15518826). Interacts with host transcription factor SP3 (PubMed:11853402).</text>
</comment>
<comment type="subcellular location">
    <subcellularLocation>
        <location evidence="7">Host nucleus</location>
    </subcellularLocation>
</comment>
<comment type="domain">
    <text evidence="10">In the N-terminus, the endonuclease region is involved in binding to the origin of replication on the viral DNA as well as to the overlapping viral promoter p6. In the middle, there are the ATPase and helicase activities. The C-terminus probably contains a transactivation domain.</text>
</comment>
<comment type="similarity">
    <text evidence="13">Belongs to the parvoviruses initiator protein NS1 family.</text>
</comment>
<keyword id="KW-0002">3D-structure</keyword>
<keyword id="KW-0067">ATP-binding</keyword>
<keyword id="KW-0190">Covalent protein-DNA linkage</keyword>
<keyword id="KW-0235">DNA replication</keyword>
<keyword id="KW-0238">DNA-binding</keyword>
<keyword id="KW-0255">Endonuclease</keyword>
<keyword id="KW-0347">Helicase</keyword>
<keyword id="KW-1079">Host G2/M cell cycle arrest by virus</keyword>
<keyword id="KW-1048">Host nucleus</keyword>
<keyword id="KW-0945">Host-virus interaction</keyword>
<keyword id="KW-0378">Hydrolase</keyword>
<keyword id="KW-0460">Magnesium</keyword>
<keyword id="KW-0464">Manganese</keyword>
<keyword id="KW-0479">Metal-binding</keyword>
<keyword id="KW-1119">Modulation of host cell apoptosis by virus</keyword>
<keyword id="KW-1121">Modulation of host cell cycle by virus</keyword>
<keyword id="KW-0511">Multifunctional enzyme</keyword>
<keyword id="KW-0540">Nuclease</keyword>
<keyword id="KW-0547">Nucleotide-binding</keyword>
<keyword id="KW-1185">Reference proteome</keyword>
<keyword id="KW-0804">Transcription</keyword>
<keyword id="KW-0805">Transcription regulation</keyword>
<keyword id="KW-1194">Viral DNA replication</keyword>
<evidence type="ECO:0000250" key="1">
    <source>
        <dbReference type="UniProtKB" id="P03134"/>
    </source>
</evidence>
<evidence type="ECO:0000255" key="2">
    <source>
        <dbReference type="PROSITE-ProRule" id="PRU00551"/>
    </source>
</evidence>
<evidence type="ECO:0000255" key="3">
    <source>
        <dbReference type="PROSITE-ProRule" id="PRU01366"/>
    </source>
</evidence>
<evidence type="ECO:0000256" key="4">
    <source>
        <dbReference type="SAM" id="MobiDB-lite"/>
    </source>
</evidence>
<evidence type="ECO:0000269" key="5">
    <source>
    </source>
</evidence>
<evidence type="ECO:0000269" key="6">
    <source>
    </source>
</evidence>
<evidence type="ECO:0000269" key="7">
    <source>
    </source>
</evidence>
<evidence type="ECO:0000269" key="8">
    <source>
    </source>
</evidence>
<evidence type="ECO:0000269" key="9">
    <source>
    </source>
</evidence>
<evidence type="ECO:0000269" key="10">
    <source>
    </source>
</evidence>
<evidence type="ECO:0000269" key="11">
    <source>
    </source>
</evidence>
<evidence type="ECO:0000269" key="12">
    <source>
    </source>
</evidence>
<evidence type="ECO:0000305" key="13"/>
<feature type="chain" id="PRO_0000428715" description="Initiator protein NS1">
    <location>
        <begin position="1"/>
        <end position="671"/>
    </location>
</feature>
<feature type="domain" description="PV NS1-Nuc" evidence="3">
    <location>
        <begin position="1"/>
        <end position="186"/>
    </location>
</feature>
<feature type="domain" description="SF3 helicase" evidence="2">
    <location>
        <begin position="302"/>
        <end position="457"/>
    </location>
</feature>
<feature type="region of interest" description="Endonuclease" evidence="10">
    <location>
        <begin position="1"/>
        <end position="176"/>
    </location>
</feature>
<feature type="region of interest" description="Disordered" evidence="4">
    <location>
        <begin position="532"/>
        <end position="553"/>
    </location>
</feature>
<feature type="short sequence motif" description="RCR-2" evidence="3">
    <location>
        <begin position="81"/>
        <end position="83"/>
    </location>
</feature>
<feature type="short sequence motif" description="RCR-3" evidence="3">
    <location>
        <begin position="141"/>
        <end position="145"/>
    </location>
</feature>
<feature type="short sequence motif" description="Nuclear localization signal" evidence="7">
    <location>
        <begin position="177"/>
        <end position="180"/>
    </location>
</feature>
<feature type="compositionally biased region" description="Polar residues" evidence="4">
    <location>
        <begin position="533"/>
        <end position="548"/>
    </location>
</feature>
<feature type="active site" description="For nuclease activity" evidence="3">
    <location>
        <position position="141"/>
    </location>
</feature>
<feature type="binding site" evidence="3">
    <location>
        <position position="72"/>
    </location>
    <ligand>
        <name>a divalent metal cation</name>
        <dbReference type="ChEBI" id="CHEBI:60240"/>
    </ligand>
</feature>
<feature type="binding site" evidence="3">
    <location>
        <position position="81"/>
    </location>
    <ligand>
        <name>a divalent metal cation</name>
        <dbReference type="ChEBI" id="CHEBI:60240"/>
    </ligand>
</feature>
<feature type="binding site" evidence="3">
    <location>
        <position position="83"/>
    </location>
    <ligand>
        <name>a divalent metal cation</name>
        <dbReference type="ChEBI" id="CHEBI:60240"/>
    </ligand>
</feature>
<feature type="binding site" evidence="2">
    <location>
        <begin position="328"/>
        <end position="335"/>
    </location>
    <ligand>
        <name>ATP</name>
        <dbReference type="ChEBI" id="CHEBI:30616"/>
    </ligand>
</feature>
<feature type="mutagenesis site" description="Complete loss of nuclear localization. Complete loss of NS1-mediated nuclear translocation of host E2F4 and E2F5, although still up-regulating their expression." evidence="7">
    <original>K</original>
    <variation>C</variation>
    <location>
        <position position="177"/>
    </location>
</feature>
<sequence length="671" mass="74065">MELFRGVLQVSSNVLDCANDNWWCSLLDLDTSDWEPLTHTNRLMAIYLSSVASKLDFTGGPLAGCLYFFQVECNKFEEGYHIHVVIGGPGLNPRNLTVCVEGLFNNVLYHLVTENVKLKFLPGMTTKGKYFRDGEQFIENYLMKKIPLNVVWCVTNIDGYIDTCISATFRRGACHAKKPRITTAINDTSSDAGESSGTGAEVVPINGKGTKASIKFQTMVNWLCENRVFTEDKWKLVDFNQYTLLSSSHSGSFQIQSALKLAIYKATNLVPTSTFLLHTDFEQVMCIKDNKIVKLLLCQNYDPLLVGQHVLKWIDKKCGKKNTLWFYGPPSTGKTNLAMAIAKSVPVYGMVNWNNENFPFNDVAGKSLVVWDEGIIKSTIVEAAKAILGGQPTRVDQKMRGSVAVPGVPVVITSNGDITFVVSGNTTTTVHAKALKERMVKLNFTVRCSPDMGLLTEADVQQWLTWCNAQSWDHYENWAINYTFDFPGINADALHPDLQTTPIVTDTSISSSGGESSEELSESSFFNLITPGAWNTETPRSSTPIPGTSSGESFVGSSVSSEVVAASWEEAFYTPLADQFRELLVGVDYVWDGVRGLPVCCVQHINNSGGGLGLCPHCINVGAWYNGWKFREFTPDLVRCSCHVGASNPFSVLTCKKCAYLSGLQSFVDYE</sequence>
<gene>
    <name type="primary">NS1</name>
</gene>
<proteinExistence type="evidence at protein level"/>
<accession>Q9PZT1</accession>
<reference key="1">
    <citation type="submission" date="1999-06" db="EMBL/GenBank/DDBJ databases">
        <title>B19 genome sequence and structure analysis.</title>
        <authorList>
            <person name="Gallinella G."/>
            <person name="Venturoli S."/>
        </authorList>
    </citation>
    <scope>NUCLEOTIDE SEQUENCE [GENOMIC DNA]</scope>
</reference>
<reference key="2">
    <citation type="journal article" date="1996" name="J. Virol.">
        <title>A cytotoxic nonstructural protein, NS1, of human parvovirus B19 induces activation of interleukin-6 gene expression.</title>
        <authorList>
            <person name="Moffatt S."/>
            <person name="Tanaka N."/>
            <person name="Tada K."/>
            <person name="Nose M."/>
            <person name="Nakamura M."/>
            <person name="Muraoka O."/>
            <person name="Hirano T."/>
            <person name="Sugamura K."/>
        </authorList>
    </citation>
    <scope>FUNCTION</scope>
</reference>
<reference key="3">
    <citation type="journal article" date="1998" name="J. Virol.">
        <title>Human parvovirus B19 nonstructural (NS1) protein induces apoptosis in erythroid lineage cells.</title>
        <authorList>
            <person name="Moffatt S."/>
            <person name="Yaegashi N."/>
            <person name="Tada K."/>
            <person name="Tanaka N."/>
            <person name="Sugamura K."/>
        </authorList>
    </citation>
    <scope>FUNCTION</scope>
</reference>
<reference key="4">
    <citation type="journal article" date="2002" name="Virology">
        <title>NS1 protein of parvovirus B19 interacts directly with DNA sequences of the p6 promoter and with the cellular transcription factors Sp1/Sp3.</title>
        <authorList>
            <person name="Raab U."/>
            <person name="Beckenlehner K."/>
            <person name="Lowin T."/>
            <person name="Niller H.H."/>
            <person name="Doyle S."/>
            <person name="Modrow S."/>
        </authorList>
    </citation>
    <scope>FUNCTION</scope>
    <scope>CATALYTIC ACTIVITY</scope>
    <scope>DNA-BINDING</scope>
    <scope>INTERACTION WITH HOST TRANSCRIPTION FACTOR SP1</scope>
    <scope>INTERACTION WITH HOST TRANSCRIPTION FACTOR SP3</scope>
</reference>
<reference key="5">
    <citation type="journal article" date="2004" name="Virology">
        <title>Human Parvovirus B19 nonstructural protein transactivates the p21/WAF1 through Sp1.</title>
        <authorList>
            <person name="Nakashima A."/>
            <person name="Morita E."/>
            <person name="Saito S."/>
            <person name="Sugamura K."/>
        </authorList>
    </citation>
    <scope>FUNCTION</scope>
    <scope>INTERACTION WITH HOST SP1</scope>
</reference>
<reference key="6">
    <citation type="journal article" date="2010" name="J. Clin. Invest.">
        <title>Human parvovirus B19 causes cell cycle arrest of human erythroid progenitors via deregulation of the E2F family of transcription factors.</title>
        <authorList>
            <person name="Wan Z."/>
            <person name="Zhi N."/>
            <person name="Wong S."/>
            <person name="Keyvanfar K."/>
            <person name="Liu D."/>
            <person name="Raghavachari N."/>
            <person name="Munson P.J."/>
            <person name="Su S."/>
            <person name="Malide D."/>
            <person name="Kajigaya S."/>
            <person name="Young N.S."/>
        </authorList>
    </citation>
    <scope>FUNCTION</scope>
    <scope>INTERACTION WITH HOST E2F4</scope>
    <scope>INTERACTION WITH HOST E2F5</scope>
    <scope>NUCLEAR LOCALIZATION SIGNAL</scope>
    <scope>SUBCELLULAR LOCATION</scope>
    <scope>MUTAGENESIS OF LYS-177</scope>
</reference>
<reference key="7">
    <citation type="journal article" date="2013" name="J. Virol.">
        <title>Human parvovirus B19 infection causes cell cycle arrest of human erythroid progenitors at late S phase that favors viral DNA replication.</title>
        <authorList>
            <person name="Luo Y."/>
            <person name="Kleiboeker S."/>
            <person name="Deng X."/>
            <person name="Qiu J."/>
        </authorList>
    </citation>
    <scope>FUNCTION</scope>
</reference>
<reference key="8">
    <citation type="journal article" date="2014" name="Virology">
        <title>The human parvovirus B19 non-structural protein 1 N-terminal domain specifically binds to the origin of replication in the viral DNA.</title>
        <authorList>
            <person name="Tewary S.K."/>
            <person name="Zhao H."/>
            <person name="Deng X."/>
            <person name="Qiu J."/>
            <person name="Tang L."/>
        </authorList>
    </citation>
    <scope>FUNCTION</scope>
</reference>
<reference key="9">
    <citation type="journal article" date="2016" name="Biochemistry">
        <title>DNA binding and cleavage by the human parvovirus B19 NS1 nuclease domain.</title>
        <authorList>
            <person name="Sanchez J.L."/>
            <person name="Romero Z."/>
            <person name="Quinones A."/>
            <person name="Torgeson K.R."/>
            <person name="Horton N.C."/>
        </authorList>
    </citation>
    <scope>FUNCTION</scope>
    <scope>DOMAIN</scope>
    <scope>DNA-BINDING</scope>
    <scope>CATALYTIC ACTIVITY</scope>
    <scope>SUBUNIT</scope>
    <scope>BIOPHYSICOCHEMICAL PROPERTIES</scope>
    <scope>COFACTOR</scope>
    <source>
        <strain>Isolate BR-3728/9</strain>
    </source>
</reference>
<dbReference type="EC" id="3.1.21.-" evidence="10"/>
<dbReference type="EC" id="3.6.4.12" evidence="5"/>
<dbReference type="EMBL" id="AF162273">
    <property type="protein sequence ID" value="AAD46613.1"/>
    <property type="molecule type" value="Genomic_DNA"/>
</dbReference>
<dbReference type="PDB" id="8F2Q">
    <property type="method" value="X-ray"/>
    <property type="resolution" value="2.70 A"/>
    <property type="chains" value="B/C=172-182"/>
</dbReference>
<dbReference type="PDBsum" id="8F2Q"/>
<dbReference type="SMR" id="Q9PZT1"/>
<dbReference type="ABCD" id="Q9PZT1">
    <property type="antibodies" value="1 sequenced antibody"/>
</dbReference>
<dbReference type="Proteomes" id="UP000006624">
    <property type="component" value="Segment"/>
</dbReference>
<dbReference type="GO" id="GO:0042025">
    <property type="term" value="C:host cell nucleus"/>
    <property type="evidence" value="ECO:0000314"/>
    <property type="project" value="UniProtKB"/>
</dbReference>
<dbReference type="GO" id="GO:0005524">
    <property type="term" value="F:ATP binding"/>
    <property type="evidence" value="ECO:0007669"/>
    <property type="project" value="UniProtKB-KW"/>
</dbReference>
<dbReference type="GO" id="GO:0016887">
    <property type="term" value="F:ATP hydrolysis activity"/>
    <property type="evidence" value="ECO:0007669"/>
    <property type="project" value="RHEA"/>
</dbReference>
<dbReference type="GO" id="GO:0003677">
    <property type="term" value="F:DNA binding"/>
    <property type="evidence" value="ECO:0007669"/>
    <property type="project" value="UniProtKB-KW"/>
</dbReference>
<dbReference type="GO" id="GO:0004519">
    <property type="term" value="F:endonuclease activity"/>
    <property type="evidence" value="ECO:0000314"/>
    <property type="project" value="UniProtKB"/>
</dbReference>
<dbReference type="GO" id="GO:0004386">
    <property type="term" value="F:helicase activity"/>
    <property type="evidence" value="ECO:0007669"/>
    <property type="project" value="UniProtKB-KW"/>
</dbReference>
<dbReference type="GO" id="GO:0046872">
    <property type="term" value="F:metal ion binding"/>
    <property type="evidence" value="ECO:0007669"/>
    <property type="project" value="UniProtKB-KW"/>
</dbReference>
<dbReference type="GO" id="GO:0006260">
    <property type="term" value="P:DNA replication"/>
    <property type="evidence" value="ECO:0007669"/>
    <property type="project" value="UniProtKB-KW"/>
</dbReference>
<dbReference type="GO" id="GO:0039685">
    <property type="term" value="P:rolling hairpin viral DNA replication"/>
    <property type="evidence" value="ECO:0000314"/>
    <property type="project" value="UniProtKB"/>
</dbReference>
<dbReference type="GO" id="GO:0052151">
    <property type="term" value="P:symbiont-mediated activation of host apoptosis"/>
    <property type="evidence" value="ECO:0000314"/>
    <property type="project" value="UniProtKB"/>
</dbReference>
<dbReference type="GO" id="GO:0039592">
    <property type="term" value="P:symbiont-mediated arrest of host cell cycle during G2/M transition"/>
    <property type="evidence" value="ECO:0000314"/>
    <property type="project" value="UniProtKB"/>
</dbReference>
<dbReference type="GO" id="GO:0052026">
    <property type="term" value="P:symbiont-mediated perturbation of host transcription"/>
    <property type="evidence" value="ECO:0000314"/>
    <property type="project" value="UniProtKB"/>
</dbReference>
<dbReference type="FunFam" id="3.40.1310.20:FF:000006">
    <property type="entry name" value="Initiator protein NS1"/>
    <property type="match status" value="1"/>
</dbReference>
<dbReference type="Gene3D" id="3.40.1310.20">
    <property type="match status" value="1"/>
</dbReference>
<dbReference type="Gene3D" id="3.40.50.300">
    <property type="entry name" value="P-loop containing nucleotide triphosphate hydrolases"/>
    <property type="match status" value="1"/>
</dbReference>
<dbReference type="InterPro" id="IPR014015">
    <property type="entry name" value="Helicase_SF3_DNA-vir"/>
</dbReference>
<dbReference type="InterPro" id="IPR014835">
    <property type="entry name" value="NS1-Nuc"/>
</dbReference>
<dbReference type="InterPro" id="IPR027417">
    <property type="entry name" value="P-loop_NTPase"/>
</dbReference>
<dbReference type="InterPro" id="IPR001257">
    <property type="entry name" value="Parvovirus_NS1_helicase"/>
</dbReference>
<dbReference type="InterPro" id="IPR049901">
    <property type="entry name" value="PV_NS1-NUC"/>
</dbReference>
<dbReference type="Pfam" id="PF01057">
    <property type="entry name" value="Parvo_NS1"/>
    <property type="match status" value="1"/>
</dbReference>
<dbReference type="Pfam" id="PF08724">
    <property type="entry name" value="Rep_N"/>
    <property type="match status" value="1"/>
</dbReference>
<dbReference type="SUPFAM" id="SSF55464">
    <property type="entry name" value="Origin of replication-binding domain, RBD-like"/>
    <property type="match status" value="1"/>
</dbReference>
<dbReference type="SUPFAM" id="SSF52540">
    <property type="entry name" value="P-loop containing nucleoside triphosphate hydrolases"/>
    <property type="match status" value="1"/>
</dbReference>
<dbReference type="PROSITE" id="PS52022">
    <property type="entry name" value="PV_NS1_NUC"/>
    <property type="match status" value="1"/>
</dbReference>
<dbReference type="PROSITE" id="PS51206">
    <property type="entry name" value="SF3_HELICASE_1"/>
    <property type="match status" value="1"/>
</dbReference>
<organismHost>
    <name type="scientific">Homo sapiens</name>
    <name type="common">Human</name>
    <dbReference type="NCBI Taxonomy" id="9606"/>
</organismHost>